<accession>P20406</accession>
<keyword id="KW-0002">3D-structure</keyword>
<keyword id="KW-0945">Host-virus interaction</keyword>
<keyword id="KW-1090">Inhibition of host innate immune response by virus</keyword>
<keyword id="KW-1185">Reference proteome</keyword>
<keyword id="KW-0899">Viral immunoevasion</keyword>
<name>GP59_BPT7</name>
<feature type="chain" id="PRO_0000106503" description="Probable RecBCD inhibitor gp5.9">
    <location>
        <begin position="1"/>
        <end position="52"/>
    </location>
</feature>
<feature type="mutagenesis site" description="Allows phage to overcome the retron Ec48 defense system; when associated with 'C-128' in the gp1.7 protein. Is not toxic when expressed alone in E.coli." evidence="1">
    <original>L</original>
    <variation>P</variation>
    <location>
        <position position="23"/>
    </location>
</feature>
<feature type="strand" evidence="3">
    <location>
        <begin position="5"/>
        <end position="9"/>
    </location>
</feature>
<feature type="helix" evidence="3">
    <location>
        <begin position="10"/>
        <end position="48"/>
    </location>
</feature>
<evidence type="ECO:0000269" key="1">
    <source>
    </source>
</evidence>
<evidence type="ECO:0000305" key="2">
    <source>
    </source>
</evidence>
<evidence type="ECO:0007829" key="3">
    <source>
        <dbReference type="PDB" id="8B1R"/>
    </source>
</evidence>
<sequence length="52" mass="6045">MSRDLVTIPRDVWNDIQGYIDSLERENDSLKNQLMEADEYVAELEEKLNGTS</sequence>
<dbReference type="EMBL" id="V01146">
    <property type="protein sequence ID" value="CAA24417.1"/>
    <property type="molecule type" value="Genomic_DNA"/>
</dbReference>
<dbReference type="PIR" id="S42315">
    <property type="entry name" value="S42315"/>
</dbReference>
<dbReference type="RefSeq" id="NP_041987.1">
    <property type="nucleotide sequence ID" value="NC_001604.1"/>
</dbReference>
<dbReference type="PDB" id="8B1R">
    <property type="method" value="EM"/>
    <property type="resolution" value="3.20 A"/>
    <property type="chains" value="P/Q=1-52"/>
</dbReference>
<dbReference type="PDBsum" id="8B1R"/>
<dbReference type="EMDB" id="EMD-15803"/>
<dbReference type="SMR" id="P20406"/>
<dbReference type="KEGG" id="vg:1261037"/>
<dbReference type="OrthoDB" id="25722at10239"/>
<dbReference type="Proteomes" id="UP000000840">
    <property type="component" value="Genome"/>
</dbReference>
<dbReference type="GO" id="GO:0052170">
    <property type="term" value="P:symbiont-mediated suppression of host innate immune response"/>
    <property type="evidence" value="ECO:0007669"/>
    <property type="project" value="UniProtKB-KW"/>
</dbReference>
<protein>
    <recommendedName>
        <fullName>Probable RecBCD inhibitor gp5.9</fullName>
    </recommendedName>
    <alternativeName>
        <fullName>Gene product 5.9</fullName>
        <shortName>Gp5.9</shortName>
    </alternativeName>
</protein>
<comment type="function">
    <text evidence="1 2">Plays a role in the inhibition of the host RecBCD complex (also called exonuclease V) (Probable). A double mutation in this protein and the nucleotide kinase gp1.7 protein allows phage to overcome the retron Ec48 bacteriophage defense system. Overexpression of the wild-type gp5.9 protein in E.coli with an intact Ec48 retron leads to a dramatic decrease in cell counts consistent with cell death, the L23P mutant does not have this effect (PubMed:33157039).</text>
</comment>
<comment type="caution">
    <text evidence="2">In (PubMed:127051), the authors do not clearly identify gene 5.9 protein but a T7 protein as having this activity. Later publications assign this activity to gene 5.9 protein.</text>
</comment>
<reference key="1">
    <citation type="journal article" date="1983" name="J. Mol. Biol.">
        <title>Complete nucleotide sequence of bacteriophage T7 DNA and the locations of T7 genetic elements.</title>
        <authorList>
            <person name="Dunn J.J."/>
            <person name="Studier F.W."/>
        </authorList>
    </citation>
    <scope>NUCLEOTIDE SEQUENCE [LARGE SCALE GENOMIC DNA]</scope>
</reference>
<reference key="2">
    <citation type="submission" date="1993-11" db="EMBL/GenBank/DDBJ databases">
        <authorList>
            <person name="Dunn J.J."/>
        </authorList>
    </citation>
    <scope>SEQUENCE REVISION</scope>
</reference>
<reference key="3">
    <citation type="journal article" date="1975" name="J. Virol.">
        <title>Partial purification and properties of a bacteriophage T7 inhibitor of the host exonuclease V activity.</title>
        <authorList>
            <person name="Pacumbaba R."/>
            <person name="Center M.S."/>
        </authorList>
    </citation>
    <scope>FUNCTION</scope>
</reference>
<reference key="4">
    <citation type="journal article" date="2020" name="Cell">
        <title>Bacterial Retrons Function In Anti-Phage Defense.</title>
        <authorList>
            <person name="Millman A."/>
            <person name="Bernheim A."/>
            <person name="Stokar-Avihail A."/>
            <person name="Fedorenko T."/>
            <person name="Voichek M."/>
            <person name="Leavitt A."/>
            <person name="Oppenheimer-Shaanan Y."/>
            <person name="Sorek R."/>
        </authorList>
    </citation>
    <scope>FUNCTION</scope>
    <scope>MUTAGENESIS OF LEU-23</scope>
</reference>
<organism>
    <name type="scientific">Escherichia phage T7</name>
    <name type="common">Bacteriophage T7</name>
    <dbReference type="NCBI Taxonomy" id="10760"/>
    <lineage>
        <taxon>Viruses</taxon>
        <taxon>Duplodnaviria</taxon>
        <taxon>Heunggongvirae</taxon>
        <taxon>Uroviricota</taxon>
        <taxon>Caudoviricetes</taxon>
        <taxon>Autographiviridae</taxon>
        <taxon>Studiervirinae</taxon>
        <taxon>Teseptimavirus</taxon>
        <taxon>Teseptimavirus T7</taxon>
    </lineage>
</organism>
<proteinExistence type="evidence at protein level"/>
<gene>
    <name type="ordered locus">5.9</name>
</gene>
<organismHost>
    <name type="scientific">Escherichia coli</name>
    <dbReference type="NCBI Taxonomy" id="562"/>
</organismHost>